<evidence type="ECO:0000255" key="1">
    <source>
        <dbReference type="HAMAP-Rule" id="MF_01218"/>
    </source>
</evidence>
<keyword id="KW-0021">Allosteric enzyme</keyword>
<keyword id="KW-0328">Glycosyltransferase</keyword>
<keyword id="KW-0342">GTP-binding</keyword>
<keyword id="KW-0460">Magnesium</keyword>
<keyword id="KW-0547">Nucleotide-binding</keyword>
<keyword id="KW-1185">Reference proteome</keyword>
<keyword id="KW-0808">Transferase</keyword>
<name>UPP_BLOPB</name>
<comment type="function">
    <text evidence="1">Catalyzes the conversion of uracil and 5-phospho-alpha-D-ribose 1-diphosphate (PRPP) to UMP and diphosphate.</text>
</comment>
<comment type="catalytic activity">
    <reaction evidence="1">
        <text>UMP + diphosphate = 5-phospho-alpha-D-ribose 1-diphosphate + uracil</text>
        <dbReference type="Rhea" id="RHEA:13017"/>
        <dbReference type="ChEBI" id="CHEBI:17568"/>
        <dbReference type="ChEBI" id="CHEBI:33019"/>
        <dbReference type="ChEBI" id="CHEBI:57865"/>
        <dbReference type="ChEBI" id="CHEBI:58017"/>
        <dbReference type="EC" id="2.4.2.9"/>
    </reaction>
</comment>
<comment type="cofactor">
    <cofactor evidence="1">
        <name>Mg(2+)</name>
        <dbReference type="ChEBI" id="CHEBI:18420"/>
    </cofactor>
    <text evidence="1">Binds 1 Mg(2+) ion per subunit. The magnesium is bound as Mg-PRPP.</text>
</comment>
<comment type="activity regulation">
    <text evidence="1">Allosterically activated by GTP.</text>
</comment>
<comment type="pathway">
    <text evidence="1">Pyrimidine metabolism; UMP biosynthesis via salvage pathway; UMP from uracil: step 1/1.</text>
</comment>
<comment type="similarity">
    <text evidence="1">Belongs to the UPRTase family.</text>
</comment>
<organism>
    <name type="scientific">Blochmanniella pennsylvanica (strain BPEN)</name>
    <dbReference type="NCBI Taxonomy" id="291272"/>
    <lineage>
        <taxon>Bacteria</taxon>
        <taxon>Pseudomonadati</taxon>
        <taxon>Pseudomonadota</taxon>
        <taxon>Gammaproteobacteria</taxon>
        <taxon>Enterobacterales</taxon>
        <taxon>Enterobacteriaceae</taxon>
        <taxon>ant endosymbionts</taxon>
        <taxon>Candidatus Blochmanniella</taxon>
    </lineage>
</organism>
<gene>
    <name evidence="1" type="primary">upp</name>
    <name type="ordered locus">BPEN_538</name>
</gene>
<accession>Q492F3</accession>
<sequence>MKIVEIKHPLVRHKLGLMRICDISTKRFRELSSELGSLLTYVATDDLEVEIVTIKGWCGLVKIARIKGKKITVVPILRAGLGMMNGVLEHLPSARISIIGIYRNEITFEPIPYFHKLVSNINERMAMVLDPMLATGGSIIATIDLLKKFGCNNIKVLSIVAAPEGIKALEEKHPDIELYLASIDQKINKNGYIIPGFGDAGDKTFGTK</sequence>
<reference key="1">
    <citation type="journal article" date="2005" name="Genome Res.">
        <title>Genome sequence of Blochmannia pennsylvanicus indicates parallel evolutionary trends among bacterial mutualists of insects.</title>
        <authorList>
            <person name="Degnan P.H."/>
            <person name="Lazarus A.B."/>
            <person name="Wernegreen J.J."/>
        </authorList>
    </citation>
    <scope>NUCLEOTIDE SEQUENCE [LARGE SCALE GENOMIC DNA]</scope>
    <source>
        <strain>BPEN</strain>
    </source>
</reference>
<proteinExistence type="inferred from homology"/>
<feature type="chain" id="PRO_1000053679" description="Uracil phosphoribosyltransferase">
    <location>
        <begin position="1"/>
        <end position="208"/>
    </location>
</feature>
<feature type="binding site" evidence="1">
    <location>
        <position position="78"/>
    </location>
    <ligand>
        <name>5-phospho-alpha-D-ribose 1-diphosphate</name>
        <dbReference type="ChEBI" id="CHEBI:58017"/>
    </ligand>
</feature>
<feature type="binding site" evidence="1">
    <location>
        <position position="103"/>
    </location>
    <ligand>
        <name>5-phospho-alpha-D-ribose 1-diphosphate</name>
        <dbReference type="ChEBI" id="CHEBI:58017"/>
    </ligand>
</feature>
<feature type="binding site" evidence="1">
    <location>
        <begin position="130"/>
        <end position="138"/>
    </location>
    <ligand>
        <name>5-phospho-alpha-D-ribose 1-diphosphate</name>
        <dbReference type="ChEBI" id="CHEBI:58017"/>
    </ligand>
</feature>
<feature type="binding site" evidence="1">
    <location>
        <position position="193"/>
    </location>
    <ligand>
        <name>uracil</name>
        <dbReference type="ChEBI" id="CHEBI:17568"/>
    </ligand>
</feature>
<feature type="binding site" evidence="1">
    <location>
        <begin position="198"/>
        <end position="200"/>
    </location>
    <ligand>
        <name>uracil</name>
        <dbReference type="ChEBI" id="CHEBI:17568"/>
    </ligand>
</feature>
<feature type="binding site" evidence="1">
    <location>
        <position position="199"/>
    </location>
    <ligand>
        <name>5-phospho-alpha-D-ribose 1-diphosphate</name>
        <dbReference type="ChEBI" id="CHEBI:58017"/>
    </ligand>
</feature>
<protein>
    <recommendedName>
        <fullName evidence="1">Uracil phosphoribosyltransferase</fullName>
        <ecNumber evidence="1">2.4.2.9</ecNumber>
    </recommendedName>
    <alternativeName>
        <fullName evidence="1">UMP pyrophosphorylase</fullName>
    </alternativeName>
    <alternativeName>
        <fullName evidence="1">UPRTase</fullName>
    </alternativeName>
</protein>
<dbReference type="EC" id="2.4.2.9" evidence="1"/>
<dbReference type="EMBL" id="CP000016">
    <property type="protein sequence ID" value="AAZ41148.1"/>
    <property type="molecule type" value="Genomic_DNA"/>
</dbReference>
<dbReference type="RefSeq" id="WP_011283059.1">
    <property type="nucleotide sequence ID" value="NC_007292.1"/>
</dbReference>
<dbReference type="SMR" id="Q492F3"/>
<dbReference type="STRING" id="291272.BPEN_538"/>
<dbReference type="KEGG" id="bpn:BPEN_538"/>
<dbReference type="eggNOG" id="COG0035">
    <property type="taxonomic scope" value="Bacteria"/>
</dbReference>
<dbReference type="HOGENOM" id="CLU_067096_2_2_6"/>
<dbReference type="OrthoDB" id="9781675at2"/>
<dbReference type="UniPathway" id="UPA00574">
    <property type="reaction ID" value="UER00636"/>
</dbReference>
<dbReference type="Proteomes" id="UP000007794">
    <property type="component" value="Chromosome"/>
</dbReference>
<dbReference type="GO" id="GO:0005525">
    <property type="term" value="F:GTP binding"/>
    <property type="evidence" value="ECO:0007669"/>
    <property type="project" value="UniProtKB-KW"/>
</dbReference>
<dbReference type="GO" id="GO:0000287">
    <property type="term" value="F:magnesium ion binding"/>
    <property type="evidence" value="ECO:0007669"/>
    <property type="project" value="UniProtKB-UniRule"/>
</dbReference>
<dbReference type="GO" id="GO:0004845">
    <property type="term" value="F:uracil phosphoribosyltransferase activity"/>
    <property type="evidence" value="ECO:0007669"/>
    <property type="project" value="UniProtKB-UniRule"/>
</dbReference>
<dbReference type="GO" id="GO:0044206">
    <property type="term" value="P:UMP salvage"/>
    <property type="evidence" value="ECO:0007669"/>
    <property type="project" value="UniProtKB-UniRule"/>
</dbReference>
<dbReference type="GO" id="GO:0006223">
    <property type="term" value="P:uracil salvage"/>
    <property type="evidence" value="ECO:0007669"/>
    <property type="project" value="InterPro"/>
</dbReference>
<dbReference type="CDD" id="cd06223">
    <property type="entry name" value="PRTases_typeI"/>
    <property type="match status" value="1"/>
</dbReference>
<dbReference type="FunFam" id="3.40.50.2020:FF:000003">
    <property type="entry name" value="Uracil phosphoribosyltransferase"/>
    <property type="match status" value="1"/>
</dbReference>
<dbReference type="Gene3D" id="3.40.50.2020">
    <property type="match status" value="1"/>
</dbReference>
<dbReference type="HAMAP" id="MF_01218_B">
    <property type="entry name" value="Upp_B"/>
    <property type="match status" value="1"/>
</dbReference>
<dbReference type="InterPro" id="IPR000836">
    <property type="entry name" value="PRibTrfase_dom"/>
</dbReference>
<dbReference type="InterPro" id="IPR029057">
    <property type="entry name" value="PRTase-like"/>
</dbReference>
<dbReference type="InterPro" id="IPR034332">
    <property type="entry name" value="Upp_B"/>
</dbReference>
<dbReference type="InterPro" id="IPR050054">
    <property type="entry name" value="UPRTase/APRTase"/>
</dbReference>
<dbReference type="InterPro" id="IPR005765">
    <property type="entry name" value="Ura_phspho_trans"/>
</dbReference>
<dbReference type="NCBIfam" id="NF001097">
    <property type="entry name" value="PRK00129.1"/>
    <property type="match status" value="1"/>
</dbReference>
<dbReference type="NCBIfam" id="TIGR01091">
    <property type="entry name" value="upp"/>
    <property type="match status" value="1"/>
</dbReference>
<dbReference type="PANTHER" id="PTHR32315">
    <property type="entry name" value="ADENINE PHOSPHORIBOSYLTRANSFERASE"/>
    <property type="match status" value="1"/>
</dbReference>
<dbReference type="PANTHER" id="PTHR32315:SF4">
    <property type="entry name" value="URACIL PHOSPHORIBOSYLTRANSFERASE, CHLOROPLASTIC"/>
    <property type="match status" value="1"/>
</dbReference>
<dbReference type="Pfam" id="PF14681">
    <property type="entry name" value="UPRTase"/>
    <property type="match status" value="1"/>
</dbReference>
<dbReference type="SUPFAM" id="SSF53271">
    <property type="entry name" value="PRTase-like"/>
    <property type="match status" value="1"/>
</dbReference>